<name>RL28_YERPY</name>
<dbReference type="EMBL" id="CP000950">
    <property type="protein sequence ID" value="ACA70413.1"/>
    <property type="molecule type" value="Genomic_DNA"/>
</dbReference>
<dbReference type="RefSeq" id="WP_002208991.1">
    <property type="nucleotide sequence ID" value="NZ_CP009792.1"/>
</dbReference>
<dbReference type="SMR" id="B1JQX2"/>
<dbReference type="GeneID" id="96663531"/>
<dbReference type="KEGG" id="ypy:YPK_4154"/>
<dbReference type="PATRIC" id="fig|502800.11.peg.505"/>
<dbReference type="GO" id="GO:1990904">
    <property type="term" value="C:ribonucleoprotein complex"/>
    <property type="evidence" value="ECO:0007669"/>
    <property type="project" value="UniProtKB-KW"/>
</dbReference>
<dbReference type="GO" id="GO:0005840">
    <property type="term" value="C:ribosome"/>
    <property type="evidence" value="ECO:0007669"/>
    <property type="project" value="UniProtKB-KW"/>
</dbReference>
<dbReference type="GO" id="GO:0003735">
    <property type="term" value="F:structural constituent of ribosome"/>
    <property type="evidence" value="ECO:0007669"/>
    <property type="project" value="InterPro"/>
</dbReference>
<dbReference type="GO" id="GO:0006412">
    <property type="term" value="P:translation"/>
    <property type="evidence" value="ECO:0007669"/>
    <property type="project" value="UniProtKB-UniRule"/>
</dbReference>
<dbReference type="FunFam" id="2.30.170.40:FF:000001">
    <property type="entry name" value="50S ribosomal protein L28"/>
    <property type="match status" value="1"/>
</dbReference>
<dbReference type="Gene3D" id="2.30.170.40">
    <property type="entry name" value="Ribosomal protein L28/L24"/>
    <property type="match status" value="1"/>
</dbReference>
<dbReference type="HAMAP" id="MF_00373">
    <property type="entry name" value="Ribosomal_bL28"/>
    <property type="match status" value="1"/>
</dbReference>
<dbReference type="InterPro" id="IPR050096">
    <property type="entry name" value="Bacterial_rp_bL28"/>
</dbReference>
<dbReference type="InterPro" id="IPR026569">
    <property type="entry name" value="Ribosomal_bL28"/>
</dbReference>
<dbReference type="InterPro" id="IPR034704">
    <property type="entry name" value="Ribosomal_bL28/bL31-like_sf"/>
</dbReference>
<dbReference type="InterPro" id="IPR001383">
    <property type="entry name" value="Ribosomal_bL28_bact-type"/>
</dbReference>
<dbReference type="InterPro" id="IPR037147">
    <property type="entry name" value="Ribosomal_bL28_sf"/>
</dbReference>
<dbReference type="NCBIfam" id="TIGR00009">
    <property type="entry name" value="L28"/>
    <property type="match status" value="1"/>
</dbReference>
<dbReference type="PANTHER" id="PTHR39080">
    <property type="entry name" value="50S RIBOSOMAL PROTEIN L28"/>
    <property type="match status" value="1"/>
</dbReference>
<dbReference type="PANTHER" id="PTHR39080:SF1">
    <property type="entry name" value="LARGE RIBOSOMAL SUBUNIT PROTEIN BL28A"/>
    <property type="match status" value="1"/>
</dbReference>
<dbReference type="Pfam" id="PF00830">
    <property type="entry name" value="Ribosomal_L28"/>
    <property type="match status" value="1"/>
</dbReference>
<dbReference type="SUPFAM" id="SSF143800">
    <property type="entry name" value="L28p-like"/>
    <property type="match status" value="1"/>
</dbReference>
<proteinExistence type="inferred from homology"/>
<feature type="chain" id="PRO_1000121715" description="Large ribosomal subunit protein bL28">
    <location>
        <begin position="1"/>
        <end position="78"/>
    </location>
</feature>
<feature type="region of interest" description="Disordered" evidence="2">
    <location>
        <begin position="1"/>
        <end position="22"/>
    </location>
</feature>
<protein>
    <recommendedName>
        <fullName evidence="1">Large ribosomal subunit protein bL28</fullName>
    </recommendedName>
    <alternativeName>
        <fullName evidence="3">50S ribosomal protein L28</fullName>
    </alternativeName>
</protein>
<evidence type="ECO:0000255" key="1">
    <source>
        <dbReference type="HAMAP-Rule" id="MF_00373"/>
    </source>
</evidence>
<evidence type="ECO:0000256" key="2">
    <source>
        <dbReference type="SAM" id="MobiDB-lite"/>
    </source>
</evidence>
<evidence type="ECO:0000305" key="3"/>
<sequence length="78" mass="9027">MSRVCQVTGKRPMSGNNRSHAMNATKRRFLPNLHSHRFWVEGEKRFVTLRVSAKGMRVIDKKGIETVLAEIRARGEKY</sequence>
<organism>
    <name type="scientific">Yersinia pseudotuberculosis serotype O:3 (strain YPIII)</name>
    <dbReference type="NCBI Taxonomy" id="502800"/>
    <lineage>
        <taxon>Bacteria</taxon>
        <taxon>Pseudomonadati</taxon>
        <taxon>Pseudomonadota</taxon>
        <taxon>Gammaproteobacteria</taxon>
        <taxon>Enterobacterales</taxon>
        <taxon>Yersiniaceae</taxon>
        <taxon>Yersinia</taxon>
    </lineage>
</organism>
<reference key="1">
    <citation type="submission" date="2008-02" db="EMBL/GenBank/DDBJ databases">
        <title>Complete sequence of Yersinia pseudotuberculosis YPIII.</title>
        <authorList>
            <consortium name="US DOE Joint Genome Institute"/>
            <person name="Copeland A."/>
            <person name="Lucas S."/>
            <person name="Lapidus A."/>
            <person name="Glavina del Rio T."/>
            <person name="Dalin E."/>
            <person name="Tice H."/>
            <person name="Bruce D."/>
            <person name="Goodwin L."/>
            <person name="Pitluck S."/>
            <person name="Munk A.C."/>
            <person name="Brettin T."/>
            <person name="Detter J.C."/>
            <person name="Han C."/>
            <person name="Tapia R."/>
            <person name="Schmutz J."/>
            <person name="Larimer F."/>
            <person name="Land M."/>
            <person name="Hauser L."/>
            <person name="Challacombe J.F."/>
            <person name="Green L."/>
            <person name="Lindler L.E."/>
            <person name="Nikolich M.P."/>
            <person name="Richardson P."/>
        </authorList>
    </citation>
    <scope>NUCLEOTIDE SEQUENCE [LARGE SCALE GENOMIC DNA]</scope>
    <source>
        <strain>YPIII</strain>
    </source>
</reference>
<comment type="similarity">
    <text evidence="1">Belongs to the bacterial ribosomal protein bL28 family.</text>
</comment>
<accession>B1JQX2</accession>
<gene>
    <name evidence="1" type="primary">rpmB</name>
    <name type="ordered locus">YPK_4154</name>
</gene>
<keyword id="KW-0687">Ribonucleoprotein</keyword>
<keyword id="KW-0689">Ribosomal protein</keyword>